<name>DPYL1_HUMAN</name>
<comment type="function">
    <text evidence="4 5 6">Necessary for signaling by class 3 semaphorins and subsequent remodeling of the cytoskeleton (PubMed:25358863). Plays a role in axon guidance (PubMed:25358863). During the axon guidance process, acts downstream of SEMA3A to promote FLNA dissociation from F-actin which results in the rearrangement of the actin cytoskeleton and the collapse of the growth cone (PubMed:25358863). Involved in invasive growth and cell migration (PubMed:11562390). May participate in cytokinesis (PubMed:19799413).</text>
</comment>
<comment type="subunit">
    <text evidence="1 6">Homotetramer, and heterotetramer with DPYSL2, DPYSL3, DPYSL4 or DPYSL5 (By similarity). Interacts with PLXNA1 (By similarity). Interacts with FLNA (via calponin-homology (CH) domain 1 and filamin repeat 24); the interaction alters FLNA ternary structure and thus promotes FLNA dissociation from F-actin (PubMed:25358863).</text>
</comment>
<comment type="interaction">
    <interactant intactId="EBI-473101">
        <id>Q14194</id>
    </interactant>
    <interactant intactId="EBI-2371151">
        <id>Q9Y2T2</id>
        <label>AP3M1</label>
    </interactant>
    <organismsDiffer>false</organismsDiffer>
    <experiments>6</experiments>
</comment>
<comment type="interaction">
    <interactant intactId="EBI-473101">
        <id>Q14194</id>
    </interactant>
    <interactant intactId="EBI-710484">
        <id>O15169</id>
        <label>AXIN1</label>
    </interactant>
    <organismsDiffer>false</organismsDiffer>
    <experiments>2</experiments>
</comment>
<comment type="interaction">
    <interactant intactId="EBI-473101">
        <id>Q14194</id>
    </interactant>
    <interactant intactId="EBI-12275524">
        <id>P23560-2</id>
        <label>BDNF</label>
    </interactant>
    <organismsDiffer>false</organismsDiffer>
    <experiments>3</experiments>
</comment>
<comment type="interaction">
    <interactant intactId="EBI-473101">
        <id>Q14194</id>
    </interactant>
    <interactant intactId="EBI-473101">
        <id>Q14194</id>
        <label>CRMP1</label>
    </interactant>
    <organismsDiffer>false</organismsDiffer>
    <experiments>3</experiments>
</comment>
<comment type="interaction">
    <interactant intactId="EBI-473101">
        <id>Q14194</id>
    </interactant>
    <interactant intactId="EBI-739060">
        <id>P02511</id>
        <label>CRYAB</label>
    </interactant>
    <organismsDiffer>false</organismsDiffer>
    <experiments>3</experiments>
</comment>
<comment type="interaction">
    <interactant intactId="EBI-473101">
        <id>Q14194</id>
    </interactant>
    <interactant intactId="EBI-1104711">
        <id>Q16555</id>
        <label>DPYSL2</label>
    </interactant>
    <organismsDiffer>false</organismsDiffer>
    <experiments>5</experiments>
</comment>
<comment type="interaction">
    <interactant intactId="EBI-473101">
        <id>Q14194</id>
    </interactant>
    <interactant intactId="EBI-10232496">
        <id>Q14195-2</id>
        <label>DPYSL3</label>
    </interactant>
    <organismsDiffer>false</organismsDiffer>
    <experiments>6</experiments>
</comment>
<comment type="interaction">
    <interactant intactId="EBI-473101">
        <id>Q14194</id>
    </interactant>
    <interactant intactId="EBI-354056">
        <id>P04406</id>
        <label>GAPDH</label>
    </interactant>
    <organismsDiffer>false</organismsDiffer>
    <experiments>3</experiments>
</comment>
<comment type="interaction">
    <interactant intactId="EBI-473101">
        <id>Q14194</id>
    </interactant>
    <interactant intactId="EBI-296047">
        <id>P07900</id>
        <label>HSP90AA1</label>
    </interactant>
    <organismsDiffer>false</organismsDiffer>
    <experiments>3</experiments>
</comment>
<comment type="interaction">
    <interactant intactId="EBI-473101">
        <id>Q14194</id>
    </interactant>
    <interactant intactId="EBI-466029">
        <id>P42858</id>
        <label>HTT</label>
    </interactant>
    <organismsDiffer>false</organismsDiffer>
    <experiments>14</experiments>
</comment>
<comment type="interaction">
    <interactant intactId="EBI-473101">
        <id>Q14194</id>
    </interactant>
    <interactant intactId="EBI-296739">
        <id>P63244</id>
        <label>RACK1</label>
    </interactant>
    <organismsDiffer>false</organismsDiffer>
    <experiments>3</experiments>
</comment>
<comment type="interaction">
    <interactant intactId="EBI-473101">
        <id>Q14194</id>
    </interactant>
    <interactant intactId="EBI-353844">
        <id>P08670</id>
        <label>VIM</label>
    </interactant>
    <organismsDiffer>false</organismsDiffer>
    <experiments>3</experiments>
</comment>
<comment type="subcellular location">
    <subcellularLocation>
        <location evidence="4">Cytoplasm</location>
    </subcellularLocation>
    <subcellularLocation>
        <location evidence="4">Cytoplasm</location>
        <location evidence="4">Cytoskeleton</location>
        <location evidence="4">Microtubule organizing center</location>
        <location evidence="4">Centrosome</location>
    </subcellularLocation>
    <subcellularLocation>
        <location evidence="4">Cytoplasm</location>
        <location evidence="4">Cytoskeleton</location>
        <location evidence="4">Spindle</location>
    </subcellularLocation>
    <subcellularLocation>
        <location evidence="1">Cell projection</location>
        <location evidence="1">Growth cone</location>
    </subcellularLocation>
    <subcellularLocation>
        <location evidence="1">Cytoplasm</location>
        <location evidence="1">Cytoskeleton</location>
    </subcellularLocation>
    <subcellularLocation>
        <location evidence="1">Perikaryon</location>
    </subcellularLocation>
    <text evidence="1 4">Associated with centrosomes and the mitotic spindle during metaphase (PubMed:11562390). Colocalizes with FLNA and tubulin in the central region of DRG neuron growth cone (By similarity). Following SEMA3A stimulation of DRG neurons, colocalizes with F-actin (By similarity).</text>
</comment>
<comment type="alternative products">
    <event type="alternative splicing"/>
    <isoform>
        <id>Q14194-1</id>
        <name>1</name>
        <sequence type="displayed"/>
    </isoform>
    <isoform>
        <id>Q14194-2</id>
        <name>LCRMP-1</name>
        <sequence type="described" ref="VSP_042545"/>
    </isoform>
</comment>
<comment type="tissue specificity">
    <text>Brain.</text>
</comment>
<comment type="PTM">
    <text evidence="6">Phosphorylation at Ser-522 enhances CRMP1-mediated alteration of FLNA ternary structure and FLNA dissociation from F-actin.</text>
</comment>
<comment type="similarity">
    <text evidence="8">Belongs to the metallo-dependent hydrolases superfamily. Hydantoinase/dihydropyrimidinase family.</text>
</comment>
<comment type="caution">
    <text evidence="8">Lacks most of the conserved residues that are essential for binding the metal cofactor and hence for dihydropyrimidinase activity. Its enzyme activity is therefore unsure.</text>
</comment>
<feature type="chain" id="PRO_0000165909" description="Dihydropyrimidinase-related protein 1">
    <location>
        <begin position="1"/>
        <end position="572"/>
    </location>
</feature>
<feature type="region of interest" description="Disordered" evidence="3">
    <location>
        <begin position="513"/>
        <end position="572"/>
    </location>
</feature>
<feature type="short sequence motif" description="Required for interaction with FLNA" evidence="6">
    <location>
        <begin position="246"/>
        <end position="247"/>
    </location>
</feature>
<feature type="compositionally biased region" description="Low complexity" evidence="3">
    <location>
        <begin position="513"/>
        <end position="525"/>
    </location>
</feature>
<feature type="compositionally biased region" description="Polar residues" evidence="3">
    <location>
        <begin position="534"/>
        <end position="543"/>
    </location>
</feature>
<feature type="modified residue" description="Phosphoserine" evidence="2">
    <location>
        <position position="8"/>
    </location>
</feature>
<feature type="modified residue" description="Phosphothreonine; by AURKA" evidence="5">
    <location>
        <position position="101"/>
    </location>
</feature>
<feature type="modified residue" description="Phosphothreonine; by AURKA" evidence="5">
    <location>
        <position position="102"/>
    </location>
</feature>
<feature type="modified residue" description="3'-nitrotyrosine" evidence="1">
    <location>
        <position position="316"/>
    </location>
</feature>
<feature type="modified residue" description="Phosphotyrosine" evidence="1">
    <location>
        <position position="504"/>
    </location>
</feature>
<feature type="modified residue" description="Phosphothreonine" evidence="1">
    <location>
        <position position="509"/>
    </location>
</feature>
<feature type="modified residue" description="Phosphoserine" evidence="2">
    <location>
        <position position="521"/>
    </location>
</feature>
<feature type="modified residue" description="Phosphoserine" evidence="9">
    <location>
        <position position="522"/>
    </location>
</feature>
<feature type="modified residue" description="Phosphoserine" evidence="1">
    <location>
        <position position="537"/>
    </location>
</feature>
<feature type="modified residue" description="Phosphoserine" evidence="1">
    <location>
        <position position="540"/>
    </location>
</feature>
<feature type="modified residue" description="Phosphoserine" evidence="1">
    <location>
        <position position="542"/>
    </location>
</feature>
<feature type="splice variant" id="VSP_042545" description="In isoform LCRMP-1." evidence="7">
    <original>MSYQGKKSIPHIT</original>
    <variation>MADRRRAWNTEDDLPVYLARPGSAAQTPRQKYGGMFAAVEGAYENKTIDFDAYSVGRRGSARTPRSAGRPDAVGLPGPGGSEDTASDVSEPSGSAVSSPGERDERPPTLRIRRPAPRDLPLGRDNGQ</variation>
    <location>
        <begin position="1"/>
        <end position="13"/>
    </location>
</feature>
<feature type="sequence variant" id="VAR_037745" description="In dbSNP:rs34611001.">
    <original>V</original>
    <variation>I</variation>
    <location>
        <position position="461"/>
    </location>
</feature>
<feature type="mutagenesis site" description="2.5-fold increase in cells with a defect of cytokinesis." evidence="5">
    <original>TT</original>
    <variation>AA</variation>
    <location>
        <begin position="101"/>
        <end position="102"/>
    </location>
</feature>
<feature type="sequence conflict" description="In Ref. 7; AAK55500." evidence="8" ref="7">
    <location>
        <begin position="351"/>
        <end position="370"/>
    </location>
</feature>
<feature type="sequence conflict" description="In Ref. 8; AAA93201." evidence="8" ref="8">
    <original>Y</original>
    <variation>H</variation>
    <location>
        <position position="504"/>
    </location>
</feature>
<feature type="strand" evidence="11">
    <location>
        <begin position="16"/>
        <end position="25"/>
    </location>
</feature>
<feature type="strand" evidence="11">
    <location>
        <begin position="30"/>
        <end position="38"/>
    </location>
</feature>
<feature type="strand" evidence="11">
    <location>
        <begin position="41"/>
        <end position="48"/>
    </location>
</feature>
<feature type="strand" evidence="11">
    <location>
        <begin position="53"/>
        <end position="59"/>
    </location>
</feature>
<feature type="strand" evidence="11">
    <location>
        <begin position="64"/>
        <end position="67"/>
    </location>
</feature>
<feature type="strand" evidence="11">
    <location>
        <begin position="69"/>
        <end position="74"/>
    </location>
</feature>
<feature type="helix" evidence="11">
    <location>
        <begin position="89"/>
        <end position="99"/>
    </location>
</feature>
<feature type="strand" evidence="11">
    <location>
        <begin position="101"/>
        <end position="108"/>
    </location>
</feature>
<feature type="helix" evidence="11">
    <location>
        <begin position="116"/>
        <end position="130"/>
    </location>
</feature>
<feature type="strand" evidence="11">
    <location>
        <begin position="132"/>
        <end position="140"/>
    </location>
</feature>
<feature type="helix" evidence="11">
    <location>
        <begin position="148"/>
        <end position="157"/>
    </location>
</feature>
<feature type="strand" evidence="11">
    <location>
        <begin position="163"/>
        <end position="170"/>
    </location>
</feature>
<feature type="turn" evidence="11">
    <location>
        <begin position="171"/>
        <end position="174"/>
    </location>
</feature>
<feature type="helix" evidence="11">
    <location>
        <begin position="178"/>
        <end position="190"/>
    </location>
</feature>
<feature type="strand" evidence="11">
    <location>
        <begin position="194"/>
        <end position="198"/>
    </location>
</feature>
<feature type="helix" evidence="11">
    <location>
        <begin position="202"/>
        <end position="213"/>
    </location>
</feature>
<feature type="turn" evidence="11">
    <location>
        <begin position="214"/>
        <end position="216"/>
    </location>
</feature>
<feature type="helix" evidence="11">
    <location>
        <begin position="221"/>
        <end position="225"/>
    </location>
</feature>
<feature type="helix" evidence="11">
    <location>
        <begin position="229"/>
        <end position="246"/>
    </location>
</feature>
<feature type="strand" evidence="11">
    <location>
        <begin position="250"/>
        <end position="255"/>
    </location>
</feature>
<feature type="helix" evidence="11">
    <location>
        <begin position="258"/>
        <end position="270"/>
    </location>
</feature>
<feature type="strand" evidence="11">
    <location>
        <begin position="274"/>
        <end position="279"/>
    </location>
</feature>
<feature type="helix" evidence="11">
    <location>
        <begin position="280"/>
        <end position="284"/>
    </location>
</feature>
<feature type="helix" evidence="11">
    <location>
        <begin position="288"/>
        <end position="291"/>
    </location>
</feature>
<feature type="helix" evidence="11">
    <location>
        <begin position="295"/>
        <end position="300"/>
    </location>
</feature>
<feature type="helix" evidence="11">
    <location>
        <begin position="313"/>
        <end position="322"/>
    </location>
</feature>
<feature type="helix" evidence="11">
    <location>
        <begin position="338"/>
        <end position="341"/>
    </location>
</feature>
<feature type="helix" evidence="11">
    <location>
        <begin position="342"/>
        <end position="344"/>
    </location>
</feature>
<feature type="helix" evidence="11">
    <location>
        <begin position="348"/>
        <end position="350"/>
    </location>
</feature>
<feature type="turn" evidence="11">
    <location>
        <begin position="358"/>
        <end position="360"/>
    </location>
</feature>
<feature type="helix" evidence="11">
    <location>
        <begin position="361"/>
        <end position="369"/>
    </location>
</feature>
<feature type="turn" evidence="11">
    <location>
        <begin position="370"/>
        <end position="373"/>
    </location>
</feature>
<feature type="helix" evidence="11">
    <location>
        <begin position="377"/>
        <end position="384"/>
    </location>
</feature>
<feature type="helix" evidence="11">
    <location>
        <begin position="386"/>
        <end position="391"/>
    </location>
</feature>
<feature type="turn" evidence="11">
    <location>
        <begin position="395"/>
        <end position="397"/>
    </location>
</feature>
<feature type="strand" evidence="11">
    <location>
        <begin position="409"/>
        <end position="419"/>
    </location>
</feature>
<feature type="strand" evidence="11">
    <location>
        <begin position="426"/>
        <end position="430"/>
    </location>
</feature>
<feature type="turn" evidence="11">
    <location>
        <begin position="433"/>
        <end position="436"/>
    </location>
</feature>
<feature type="strand" evidence="11">
    <location>
        <begin position="438"/>
        <end position="448"/>
    </location>
</feature>
<feature type="strand" evidence="11">
    <location>
        <begin position="451"/>
        <end position="455"/>
    </location>
</feature>
<feature type="helix" evidence="11">
    <location>
        <begin position="476"/>
        <end position="489"/>
    </location>
</feature>
<sequence>MSYQGKKSIPHITSDRLLIKGGRIINDDQSLYADVYLEDGLIKQIGENLIVPGGVKTIEANGRMVIPGGIDVNTYLQKPSQGMTAADDFFQGTRAALVGGTTMIIDHVVPEPGSSLLTSFEKWHEAADTKSCCDYSLHVDITSWYDGVREELEVLVQDKGVNSFQVYMAYKDVYQMSDSQLYEAFTFLKGLGAVILVHAENGDLIAQEQKRILEMGITGPEGHALSRPEELEAEAVFRAITIAGRINCPVYITKVMSKSAADIIALARKKGPLVFGEPIAASLGTDGTHYWSKNWAKAAAFVTSPPLSPDPTTPDYLTSLLACGDLQVTGSGHCPYSTAQKAVGKDNFTLIPEGVNGIEERMTVVWDKAVATGKMDENQFVAVTSTNAAKIFNLYPRKGRIAVGSDADVVIWDPDKLKTITAKSHKSAVEYNIFEGMECHGSPLVVISQGKIVFEDGNINVNKGMGRFIPRKAFPEHLYQRVKIRNKVFGLQGVSRGMYDGPVYEVPATPKYATPAPSAKSSPSKHQPPPIRNLHQSNFSLSGAQIDDNNPRRTGHRIVAPPGGRSNITSLG</sequence>
<keyword id="KW-0002">3D-structure</keyword>
<keyword id="KW-0025">Alternative splicing</keyword>
<keyword id="KW-0966">Cell projection</keyword>
<keyword id="KW-0963">Cytoplasm</keyword>
<keyword id="KW-0206">Cytoskeleton</keyword>
<keyword id="KW-0903">Direct protein sequencing</keyword>
<keyword id="KW-0944">Nitration</keyword>
<keyword id="KW-0597">Phosphoprotein</keyword>
<keyword id="KW-1267">Proteomics identification</keyword>
<keyword id="KW-1185">Reference proteome</keyword>
<reference key="1">
    <citation type="journal article" date="1996" name="Gene">
        <title>A novel gene family defined by human dihydropyrimidinase and three related proteins with differential tissue distribution.</title>
        <authorList>
            <person name="Hamajima N."/>
            <person name="Matsuda K."/>
            <person name="Sakata S."/>
            <person name="Tamaki N."/>
            <person name="Sasaki M."/>
            <person name="Nonaka M."/>
        </authorList>
    </citation>
    <scope>NUCLEOTIDE SEQUENCE [MRNA] (ISOFORM 1)</scope>
    <source>
        <tissue>Brain</tissue>
    </source>
</reference>
<reference key="2">
    <citation type="journal article" date="2010" name="Lung Cancer">
        <title>Long form collapsin response mediator protein-1 (LCRMP-1) expression is associated with clinical outcome and lymph node metastasis in non-small cell lung cancer patients.</title>
        <authorList>
            <person name="Pan S.-H."/>
            <person name="Chao Y.-C."/>
            <person name="Chen H.Y."/>
            <person name="Hung P.F."/>
            <person name="Lin P.Y."/>
            <person name="Lin C.W."/>
            <person name="Chang Y.L."/>
            <person name="Wu C.T."/>
            <person name="Lee Y.C."/>
            <person name="Yang S.-C."/>
            <person name="Hong T.-M."/>
            <person name="Yang P.-C."/>
        </authorList>
    </citation>
    <scope>NUCLEOTIDE SEQUENCE [MRNA] (ISOFORM LCRMP-1)</scope>
    <scope>ALTERNATIVE SPLICING</scope>
    <source>
        <tissue>Lung adenocarcinoma</tissue>
    </source>
</reference>
<reference key="3">
    <citation type="submission" date="2003-05" db="EMBL/GenBank/DDBJ databases">
        <title>Cloning of human full-length CDSs in BD Creator(TM) system donor vector.</title>
        <authorList>
            <person name="Kalnine N."/>
            <person name="Chen X."/>
            <person name="Rolfs A."/>
            <person name="Halleck A."/>
            <person name="Hines L."/>
            <person name="Eisenstein S."/>
            <person name="Koundinya M."/>
            <person name="Raphael J."/>
            <person name="Moreira D."/>
            <person name="Kelley T."/>
            <person name="LaBaer J."/>
            <person name="Lin Y."/>
            <person name="Phelan M."/>
            <person name="Farmer A."/>
        </authorList>
    </citation>
    <scope>NUCLEOTIDE SEQUENCE [LARGE SCALE MRNA] (ISOFORM 1)</scope>
</reference>
<reference key="4">
    <citation type="journal article" date="2005" name="Nature">
        <title>Generation and annotation of the DNA sequences of human chromosomes 2 and 4.</title>
        <authorList>
            <person name="Hillier L.W."/>
            <person name="Graves T.A."/>
            <person name="Fulton R.S."/>
            <person name="Fulton L.A."/>
            <person name="Pepin K.H."/>
            <person name="Minx P."/>
            <person name="Wagner-McPherson C."/>
            <person name="Layman D."/>
            <person name="Wylie K."/>
            <person name="Sekhon M."/>
            <person name="Becker M.C."/>
            <person name="Fewell G.A."/>
            <person name="Delehaunty K.D."/>
            <person name="Miner T.L."/>
            <person name="Nash W.E."/>
            <person name="Kremitzki C."/>
            <person name="Oddy L."/>
            <person name="Du H."/>
            <person name="Sun H."/>
            <person name="Bradshaw-Cordum H."/>
            <person name="Ali J."/>
            <person name="Carter J."/>
            <person name="Cordes M."/>
            <person name="Harris A."/>
            <person name="Isak A."/>
            <person name="van Brunt A."/>
            <person name="Nguyen C."/>
            <person name="Du F."/>
            <person name="Courtney L."/>
            <person name="Kalicki J."/>
            <person name="Ozersky P."/>
            <person name="Abbott S."/>
            <person name="Armstrong J."/>
            <person name="Belter E.A."/>
            <person name="Caruso L."/>
            <person name="Cedroni M."/>
            <person name="Cotton M."/>
            <person name="Davidson T."/>
            <person name="Desai A."/>
            <person name="Elliott G."/>
            <person name="Erb T."/>
            <person name="Fronick C."/>
            <person name="Gaige T."/>
            <person name="Haakenson W."/>
            <person name="Haglund K."/>
            <person name="Holmes A."/>
            <person name="Harkins R."/>
            <person name="Kim K."/>
            <person name="Kruchowski S.S."/>
            <person name="Strong C.M."/>
            <person name="Grewal N."/>
            <person name="Goyea E."/>
            <person name="Hou S."/>
            <person name="Levy A."/>
            <person name="Martinka S."/>
            <person name="Mead K."/>
            <person name="McLellan M.D."/>
            <person name="Meyer R."/>
            <person name="Randall-Maher J."/>
            <person name="Tomlinson C."/>
            <person name="Dauphin-Kohlberg S."/>
            <person name="Kozlowicz-Reilly A."/>
            <person name="Shah N."/>
            <person name="Swearengen-Shahid S."/>
            <person name="Snider J."/>
            <person name="Strong J.T."/>
            <person name="Thompson J."/>
            <person name="Yoakum M."/>
            <person name="Leonard S."/>
            <person name="Pearman C."/>
            <person name="Trani L."/>
            <person name="Radionenko M."/>
            <person name="Waligorski J.E."/>
            <person name="Wang C."/>
            <person name="Rock S.M."/>
            <person name="Tin-Wollam A.-M."/>
            <person name="Maupin R."/>
            <person name="Latreille P."/>
            <person name="Wendl M.C."/>
            <person name="Yang S.-P."/>
            <person name="Pohl C."/>
            <person name="Wallis J.W."/>
            <person name="Spieth J."/>
            <person name="Bieri T.A."/>
            <person name="Berkowicz N."/>
            <person name="Nelson J.O."/>
            <person name="Osborne J."/>
            <person name="Ding L."/>
            <person name="Meyer R."/>
            <person name="Sabo A."/>
            <person name="Shotland Y."/>
            <person name="Sinha P."/>
            <person name="Wohldmann P.E."/>
            <person name="Cook L.L."/>
            <person name="Hickenbotham M.T."/>
            <person name="Eldred J."/>
            <person name="Williams D."/>
            <person name="Jones T.A."/>
            <person name="She X."/>
            <person name="Ciccarelli F.D."/>
            <person name="Izaurralde E."/>
            <person name="Taylor J."/>
            <person name="Schmutz J."/>
            <person name="Myers R.M."/>
            <person name="Cox D.R."/>
            <person name="Huang X."/>
            <person name="McPherson J.D."/>
            <person name="Mardis E.R."/>
            <person name="Clifton S.W."/>
            <person name="Warren W.C."/>
            <person name="Chinwalla A.T."/>
            <person name="Eddy S.R."/>
            <person name="Marra M.A."/>
            <person name="Ovcharenko I."/>
            <person name="Furey T.S."/>
            <person name="Miller W."/>
            <person name="Eichler E.E."/>
            <person name="Bork P."/>
            <person name="Suyama M."/>
            <person name="Torrents D."/>
            <person name="Waterston R.H."/>
            <person name="Wilson R.K."/>
        </authorList>
    </citation>
    <scope>NUCLEOTIDE SEQUENCE [LARGE SCALE GENOMIC DNA]</scope>
</reference>
<reference key="5">
    <citation type="submission" date="2005-09" db="EMBL/GenBank/DDBJ databases">
        <authorList>
            <person name="Mural R.J."/>
            <person name="Istrail S."/>
            <person name="Sutton G.G."/>
            <person name="Florea L."/>
            <person name="Halpern A.L."/>
            <person name="Mobarry C.M."/>
            <person name="Lippert R."/>
            <person name="Walenz B."/>
            <person name="Shatkay H."/>
            <person name="Dew I."/>
            <person name="Miller J.R."/>
            <person name="Flanigan M.J."/>
            <person name="Edwards N.J."/>
            <person name="Bolanos R."/>
            <person name="Fasulo D."/>
            <person name="Halldorsson B.V."/>
            <person name="Hannenhalli S."/>
            <person name="Turner R."/>
            <person name="Yooseph S."/>
            <person name="Lu F."/>
            <person name="Nusskern D.R."/>
            <person name="Shue B.C."/>
            <person name="Zheng X.H."/>
            <person name="Zhong F."/>
            <person name="Delcher A.L."/>
            <person name="Huson D.H."/>
            <person name="Kravitz S.A."/>
            <person name="Mouchard L."/>
            <person name="Reinert K."/>
            <person name="Remington K.A."/>
            <person name="Clark A.G."/>
            <person name="Waterman M.S."/>
            <person name="Eichler E.E."/>
            <person name="Adams M.D."/>
            <person name="Hunkapiller M.W."/>
            <person name="Myers E.W."/>
            <person name="Venter J.C."/>
        </authorList>
    </citation>
    <scope>NUCLEOTIDE SEQUENCE [LARGE SCALE GENOMIC DNA]</scope>
</reference>
<reference key="6">
    <citation type="journal article" date="2004" name="Genome Res.">
        <title>The status, quality, and expansion of the NIH full-length cDNA project: the Mammalian Gene Collection (MGC).</title>
        <authorList>
            <consortium name="The MGC Project Team"/>
        </authorList>
    </citation>
    <scope>NUCLEOTIDE SEQUENCE [LARGE SCALE MRNA] (ISOFORM 1)</scope>
    <source>
        <tissue>Eye</tissue>
    </source>
</reference>
<reference key="7">
    <citation type="journal article" date="1998" name="DNA Res.">
        <title>Genomic organization and localization of the human CRMP-1 gene.</title>
        <authorList>
            <person name="Torres R."/>
            <person name="Polymeropoulos M.H."/>
        </authorList>
    </citation>
    <scope>NUCLEOTIDE SEQUENCE [MRNA] OF 14-572 (ISOFORM 1)</scope>
</reference>
<reference key="8">
    <citation type="journal article" date="1995" name="Nature">
        <title>Collapsin-induced growth cone collapse mediated by an intracellular protein related to UNC-33.</title>
        <authorList>
            <person name="Goshima Y."/>
            <person name="Nakamura F."/>
            <person name="Strittmatter P."/>
            <person name="Strittmatter S.M."/>
        </authorList>
    </citation>
    <scope>NUCLEOTIDE SEQUENCE [MRNA] OF 64-572 (ISOFORM 1)</scope>
    <source>
        <tissue>Brain</tissue>
    </source>
</reference>
<reference key="9">
    <citation type="submission" date="2008-12" db="UniProtKB">
        <authorList>
            <person name="Lubec G."/>
            <person name="Afjehi-Sadat L."/>
            <person name="Chen W.-Q."/>
            <person name="Sun Y."/>
        </authorList>
    </citation>
    <scope>PROTEIN SEQUENCE OF 44-56; 190-210; 246-254; 259-268; 346-361; 391-397; 452-463; 472-481; 488-511 AND 533-552</scope>
    <scope>IDENTIFICATION BY MASS SPECTROMETRY</scope>
    <source>
        <tissue>Brain</tissue>
        <tissue>Cajal-Retzius cell</tissue>
        <tissue>Fetal brain cortex</tissue>
    </source>
</reference>
<reference key="10">
    <citation type="journal article" date="1997" name="J. Neurochem.">
        <title>Brain CRMP forms heterotetramers similar to liver dihydropyrimidinase.</title>
        <authorList>
            <person name="Wang L.H."/>
            <person name="Strittmatter S.M."/>
        </authorList>
    </citation>
    <scope>SUBUNIT</scope>
    <scope>INTERACTION WITH DPYSL2 AND DPYSL4</scope>
</reference>
<reference key="11">
    <citation type="journal article" date="2001" name="J. Natl. Cancer Inst.">
        <title>Collapsin response mediator protein-1 and the invasion and metastasis of cancer cells.</title>
        <authorList>
            <person name="Shih J.-Y."/>
            <person name="Yang S.-C."/>
            <person name="Hong T.-M."/>
            <person name="Yuan A."/>
            <person name="Chen J.J.W."/>
            <person name="Yu C.-J."/>
            <person name="Chang Y.-L."/>
            <person name="Lee Y.-C."/>
            <person name="Peck K."/>
            <person name="Wu C.-W."/>
            <person name="Yang P.-C."/>
        </authorList>
    </citation>
    <scope>FUNCTION</scope>
    <scope>SUBCELLULAR LOCATION</scope>
</reference>
<reference key="12">
    <citation type="journal article" date="2009" name="J. Proteome Res.">
        <title>From midbody protein-protein interaction network construction to novel regulators in cytokinesis.</title>
        <authorList>
            <person name="Chen T.C."/>
            <person name="Lee S.A."/>
            <person name="Hong T.M."/>
            <person name="Shih J.Y."/>
            <person name="Lai J.M."/>
            <person name="Chiou H.Y."/>
            <person name="Yang S.C."/>
            <person name="Chan C.H."/>
            <person name="Kao C.Y."/>
            <person name="Yang P.C."/>
            <person name="Huang C.Y."/>
        </authorList>
    </citation>
    <scope>FUNCTION</scope>
    <scope>PHOSPHORYLATION AT THR-101 AND THR-102</scope>
    <scope>MUTAGENESIS OF 101-THR-THR-102</scope>
</reference>
<reference key="13">
    <citation type="journal article" date="2014" name="Nat. Commun.">
        <title>Amino- and carboxyl-terminal domains of Filamin-A interact with CRMP1 to mediate Sema3A signalling.</title>
        <authorList>
            <person name="Nakamura F."/>
            <person name="Kumeta K."/>
            <person name="Hida T."/>
            <person name="Isono T."/>
            <person name="Nakayama Y."/>
            <person name="Kuramata-Matsuoka E."/>
            <person name="Yamashita N."/>
            <person name="Uchida Y."/>
            <person name="Ogura K."/>
            <person name="Gengyo-Ando K."/>
            <person name="Mitani S."/>
            <person name="Ogino T."/>
            <person name="Goshima Y."/>
        </authorList>
    </citation>
    <scope>FUNCTION</scope>
    <scope>INTERACTION WITH FLNA</scope>
    <scope>MOTIF</scope>
    <scope>PHOSPHORYLATION AT SER-522</scope>
</reference>
<reference evidence="10" key="14">
    <citation type="journal article" date="2015" name="Acta Crystallogr. F">
        <title>Structure of human collapsin response mediator protein 1: a possible role of its C-terminal tail.</title>
        <authorList>
            <person name="Liu S.H."/>
            <person name="Huang S.F."/>
            <person name="Hsu Y.L."/>
            <person name="Pan S.H."/>
            <person name="Chen Y.J."/>
            <person name="Lin Y.H."/>
        </authorList>
    </citation>
    <scope>X-RAY CRYSTALLOGRAPHY (3.05 ANGSTROMS)</scope>
</reference>
<evidence type="ECO:0000250" key="1">
    <source>
        <dbReference type="UniProtKB" id="P97427"/>
    </source>
</evidence>
<evidence type="ECO:0000250" key="2">
    <source>
        <dbReference type="UniProtKB" id="Q62950"/>
    </source>
</evidence>
<evidence type="ECO:0000256" key="3">
    <source>
        <dbReference type="SAM" id="MobiDB-lite"/>
    </source>
</evidence>
<evidence type="ECO:0000269" key="4">
    <source>
    </source>
</evidence>
<evidence type="ECO:0000269" key="5">
    <source>
    </source>
</evidence>
<evidence type="ECO:0000269" key="6">
    <source>
    </source>
</evidence>
<evidence type="ECO:0000303" key="7">
    <source>
    </source>
</evidence>
<evidence type="ECO:0000305" key="8"/>
<evidence type="ECO:0000305" key="9">
    <source>
    </source>
</evidence>
<evidence type="ECO:0007744" key="10">
    <source>
        <dbReference type="PDB" id="4B3Z"/>
    </source>
</evidence>
<evidence type="ECO:0007829" key="11">
    <source>
        <dbReference type="PDB" id="4B3Z"/>
    </source>
</evidence>
<gene>
    <name type="primary">CRMP1</name>
    <name type="synonym">DPYSL1</name>
    <name type="synonym">ULIP3</name>
</gene>
<organism>
    <name type="scientific">Homo sapiens</name>
    <name type="common">Human</name>
    <dbReference type="NCBI Taxonomy" id="9606"/>
    <lineage>
        <taxon>Eukaryota</taxon>
        <taxon>Metazoa</taxon>
        <taxon>Chordata</taxon>
        <taxon>Craniata</taxon>
        <taxon>Vertebrata</taxon>
        <taxon>Euteleostomi</taxon>
        <taxon>Mammalia</taxon>
        <taxon>Eutheria</taxon>
        <taxon>Euarchontoglires</taxon>
        <taxon>Primates</taxon>
        <taxon>Haplorrhini</taxon>
        <taxon>Catarrhini</taxon>
        <taxon>Hominidae</taxon>
        <taxon>Homo</taxon>
    </lineage>
</organism>
<protein>
    <recommendedName>
        <fullName>Dihydropyrimidinase-related protein 1</fullName>
        <shortName>DRP-1</shortName>
    </recommendedName>
    <alternativeName>
        <fullName>Collapsin response mediator protein 1</fullName>
        <shortName>CRMP-1</shortName>
    </alternativeName>
    <alternativeName>
        <fullName evidence="8">Inactive dihydropyrimidinase</fullName>
    </alternativeName>
    <alternativeName>
        <fullName>Unc-33-like phosphoprotein 3</fullName>
        <shortName>ULIP-3</shortName>
    </alternativeName>
</protein>
<dbReference type="EMBL" id="D78012">
    <property type="protein sequence ID" value="BAA11190.1"/>
    <property type="molecule type" value="mRNA"/>
</dbReference>
<dbReference type="EMBL" id="DQ206871">
    <property type="protein sequence ID" value="ABB22046.1"/>
    <property type="molecule type" value="mRNA"/>
</dbReference>
<dbReference type="EMBL" id="BT006806">
    <property type="protein sequence ID" value="AAP35452.1"/>
    <property type="molecule type" value="mRNA"/>
</dbReference>
<dbReference type="EMBL" id="AC105915">
    <property type="protein sequence ID" value="AAY40959.1"/>
    <property type="molecule type" value="Genomic_DNA"/>
</dbReference>
<dbReference type="EMBL" id="CH471131">
    <property type="protein sequence ID" value="EAW82405.1"/>
    <property type="molecule type" value="Genomic_DNA"/>
</dbReference>
<dbReference type="EMBL" id="CH471131">
    <property type="protein sequence ID" value="EAW82407.1"/>
    <property type="molecule type" value="Genomic_DNA"/>
</dbReference>
<dbReference type="EMBL" id="BC000252">
    <property type="protein sequence ID" value="AAH00252.1"/>
    <property type="molecule type" value="mRNA"/>
</dbReference>
<dbReference type="EMBL" id="BC007613">
    <property type="protein sequence ID" value="AAH07613.1"/>
    <property type="molecule type" value="mRNA"/>
</dbReference>
<dbReference type="EMBL" id="AH010780">
    <property type="protein sequence ID" value="AAK55500.1"/>
    <property type="molecule type" value="Genomic_DNA"/>
</dbReference>
<dbReference type="EMBL" id="U17278">
    <property type="protein sequence ID" value="AAA93201.1"/>
    <property type="molecule type" value="mRNA"/>
</dbReference>
<dbReference type="CCDS" id="CCDS33950.1">
    <molecule id="Q14194-2"/>
</dbReference>
<dbReference type="CCDS" id="CCDS43207.1">
    <molecule id="Q14194-1"/>
</dbReference>
<dbReference type="PIR" id="JC5316">
    <property type="entry name" value="JC5316"/>
</dbReference>
<dbReference type="RefSeq" id="NP_001014809.1">
    <molecule id="Q14194-2"/>
    <property type="nucleotide sequence ID" value="NM_001014809.3"/>
</dbReference>
<dbReference type="RefSeq" id="NP_001275590.1">
    <property type="nucleotide sequence ID" value="NM_001288661.1"/>
</dbReference>
<dbReference type="RefSeq" id="NP_001275591.1">
    <property type="nucleotide sequence ID" value="NM_001288662.1"/>
</dbReference>
<dbReference type="RefSeq" id="NP_001304.1">
    <molecule id="Q14194-1"/>
    <property type="nucleotide sequence ID" value="NM_001313.5"/>
</dbReference>
<dbReference type="RefSeq" id="XP_047305585.1">
    <molecule id="Q14194-1"/>
    <property type="nucleotide sequence ID" value="XM_047449629.1"/>
</dbReference>
<dbReference type="RefSeq" id="XP_054204942.1">
    <molecule id="Q14194-1"/>
    <property type="nucleotide sequence ID" value="XM_054348967.1"/>
</dbReference>
<dbReference type="PDB" id="4B3Z">
    <property type="method" value="X-ray"/>
    <property type="resolution" value="3.05 A"/>
    <property type="chains" value="A/B/C/D=1-572"/>
</dbReference>
<dbReference type="PDBsum" id="4B3Z"/>
<dbReference type="SMR" id="Q14194"/>
<dbReference type="BioGRID" id="107790">
    <property type="interactions" value="134"/>
</dbReference>
<dbReference type="CORUM" id="Q14194"/>
<dbReference type="FunCoup" id="Q14194">
    <property type="interactions" value="345"/>
</dbReference>
<dbReference type="IntAct" id="Q14194">
    <property type="interactions" value="111"/>
</dbReference>
<dbReference type="MINT" id="Q14194"/>
<dbReference type="STRING" id="9606.ENSP00000321606"/>
<dbReference type="MEROPS" id="M38.974"/>
<dbReference type="GlyCosmos" id="Q14194">
    <property type="glycosylation" value="1 site, 1 glycan"/>
</dbReference>
<dbReference type="GlyGen" id="Q14194">
    <property type="glycosylation" value="2 sites, 1 O-linked glycan (1 site)"/>
</dbReference>
<dbReference type="iPTMnet" id="Q14194"/>
<dbReference type="PhosphoSitePlus" id="Q14194"/>
<dbReference type="SwissPalm" id="Q14194"/>
<dbReference type="BioMuta" id="CRMP1"/>
<dbReference type="DMDM" id="3122031"/>
<dbReference type="jPOST" id="Q14194"/>
<dbReference type="MassIVE" id="Q14194"/>
<dbReference type="PaxDb" id="9606-ENSP00000321606"/>
<dbReference type="PeptideAtlas" id="Q14194"/>
<dbReference type="ProteomicsDB" id="59915">
    <molecule id="Q14194-1"/>
</dbReference>
<dbReference type="ProteomicsDB" id="59916">
    <molecule id="Q14194-2"/>
</dbReference>
<dbReference type="Pumba" id="Q14194"/>
<dbReference type="ABCD" id="Q14194">
    <property type="antibodies" value="1 sequenced antibody"/>
</dbReference>
<dbReference type="Antibodypedia" id="9351">
    <property type="antibodies" value="438 antibodies from 36 providers"/>
</dbReference>
<dbReference type="DNASU" id="1400"/>
<dbReference type="Ensembl" id="ENST00000324989.12">
    <molecule id="Q14194-2"/>
    <property type="protein sequence ID" value="ENSP00000321606.7"/>
    <property type="gene ID" value="ENSG00000072832.15"/>
</dbReference>
<dbReference type="Ensembl" id="ENST00000397890.7">
    <molecule id="Q14194-1"/>
    <property type="protein sequence ID" value="ENSP00000380987.2"/>
    <property type="gene ID" value="ENSG00000072832.15"/>
</dbReference>
<dbReference type="GeneID" id="1400"/>
<dbReference type="KEGG" id="hsa:1400"/>
<dbReference type="MANE-Select" id="ENST00000324989.12">
    <molecule id="Q14194-2"/>
    <property type="protein sequence ID" value="ENSP00000321606.7"/>
    <property type="RefSeq nucleotide sequence ID" value="NM_001014809.3"/>
    <property type="RefSeq protein sequence ID" value="NP_001014809.1"/>
</dbReference>
<dbReference type="UCSC" id="uc003giq.5">
    <molecule id="Q14194-1"/>
    <property type="organism name" value="human"/>
</dbReference>
<dbReference type="AGR" id="HGNC:2365"/>
<dbReference type="CTD" id="1400"/>
<dbReference type="DisGeNET" id="1400"/>
<dbReference type="GeneCards" id="CRMP1"/>
<dbReference type="HGNC" id="HGNC:2365">
    <property type="gene designation" value="CRMP1"/>
</dbReference>
<dbReference type="HPA" id="ENSG00000072832">
    <property type="expression patterns" value="Tissue enhanced (brain, pituitary gland, retina)"/>
</dbReference>
<dbReference type="MIM" id="602462">
    <property type="type" value="gene"/>
</dbReference>
<dbReference type="neXtProt" id="NX_Q14194"/>
<dbReference type="OpenTargets" id="ENSG00000072832"/>
<dbReference type="PharmGKB" id="PA26885"/>
<dbReference type="VEuPathDB" id="HostDB:ENSG00000072832"/>
<dbReference type="eggNOG" id="KOG2584">
    <property type="taxonomic scope" value="Eukaryota"/>
</dbReference>
<dbReference type="GeneTree" id="ENSGT01030000234527"/>
<dbReference type="InParanoid" id="Q14194"/>
<dbReference type="OMA" id="AYQRINT"/>
<dbReference type="OrthoDB" id="10258955at2759"/>
<dbReference type="PAN-GO" id="Q14194">
    <property type="GO annotations" value="0 GO annotations based on evolutionary models"/>
</dbReference>
<dbReference type="PhylomeDB" id="Q14194"/>
<dbReference type="TreeFam" id="TF314706"/>
<dbReference type="PathwayCommons" id="Q14194"/>
<dbReference type="Reactome" id="R-HSA-399956">
    <property type="pathway name" value="CRMPs in Sema3A signaling"/>
</dbReference>
<dbReference type="SignaLink" id="Q14194"/>
<dbReference type="SIGNOR" id="Q14194"/>
<dbReference type="BioGRID-ORCS" id="1400">
    <property type="hits" value="15 hits in 1138 CRISPR screens"/>
</dbReference>
<dbReference type="CD-CODE" id="8C2F96ED">
    <property type="entry name" value="Centrosome"/>
</dbReference>
<dbReference type="CD-CODE" id="FB4E32DD">
    <property type="entry name" value="Presynaptic clusters and postsynaptic densities"/>
</dbReference>
<dbReference type="ChiTaRS" id="CRMP1">
    <property type="organism name" value="human"/>
</dbReference>
<dbReference type="EvolutionaryTrace" id="Q14194"/>
<dbReference type="GeneWiki" id="CRMP1"/>
<dbReference type="GenomeRNAi" id="1400"/>
<dbReference type="Pharos" id="Q14194">
    <property type="development level" value="Tbio"/>
</dbReference>
<dbReference type="PRO" id="PR:Q14194"/>
<dbReference type="Proteomes" id="UP000005640">
    <property type="component" value="Chromosome 4"/>
</dbReference>
<dbReference type="RNAct" id="Q14194">
    <property type="molecule type" value="protein"/>
</dbReference>
<dbReference type="Bgee" id="ENSG00000072832">
    <property type="expression patterns" value="Expressed in cortical plate and 146 other cell types or tissues"/>
</dbReference>
<dbReference type="ExpressionAtlas" id="Q14194">
    <property type="expression patterns" value="baseline and differential"/>
</dbReference>
<dbReference type="GO" id="GO:0015629">
    <property type="term" value="C:actin cytoskeleton"/>
    <property type="evidence" value="ECO:0007669"/>
    <property type="project" value="Ensembl"/>
</dbReference>
<dbReference type="GO" id="GO:0005813">
    <property type="term" value="C:centrosome"/>
    <property type="evidence" value="ECO:0000314"/>
    <property type="project" value="HPA"/>
</dbReference>
<dbReference type="GO" id="GO:0005829">
    <property type="term" value="C:cytosol"/>
    <property type="evidence" value="ECO:0000314"/>
    <property type="project" value="HPA"/>
</dbReference>
<dbReference type="GO" id="GO:0030425">
    <property type="term" value="C:dendrite"/>
    <property type="evidence" value="ECO:0007669"/>
    <property type="project" value="Ensembl"/>
</dbReference>
<dbReference type="GO" id="GO:0030426">
    <property type="term" value="C:growth cone"/>
    <property type="evidence" value="ECO:0007669"/>
    <property type="project" value="UniProtKB-SubCell"/>
</dbReference>
<dbReference type="GO" id="GO:0030496">
    <property type="term" value="C:midbody"/>
    <property type="evidence" value="ECO:0000314"/>
    <property type="project" value="HGNC"/>
</dbReference>
<dbReference type="GO" id="GO:0043204">
    <property type="term" value="C:perikaryon"/>
    <property type="evidence" value="ECO:0007669"/>
    <property type="project" value="UniProtKB-SubCell"/>
</dbReference>
<dbReference type="GO" id="GO:0098794">
    <property type="term" value="C:postsynapse"/>
    <property type="evidence" value="ECO:0007669"/>
    <property type="project" value="Ensembl"/>
</dbReference>
<dbReference type="GO" id="GO:0098793">
    <property type="term" value="C:presynapse"/>
    <property type="evidence" value="ECO:0007669"/>
    <property type="project" value="Ensembl"/>
</dbReference>
<dbReference type="GO" id="GO:0005819">
    <property type="term" value="C:spindle"/>
    <property type="evidence" value="ECO:0007669"/>
    <property type="project" value="UniProtKB-SubCell"/>
</dbReference>
<dbReference type="GO" id="GO:0031005">
    <property type="term" value="F:filamin binding"/>
    <property type="evidence" value="ECO:0000353"/>
    <property type="project" value="WormBase"/>
</dbReference>
<dbReference type="GO" id="GO:0016812">
    <property type="term" value="F:hydrolase activity, acting on carbon-nitrogen (but not peptide) bonds, in cyclic amides"/>
    <property type="evidence" value="ECO:0000318"/>
    <property type="project" value="GO_Central"/>
</dbReference>
<dbReference type="GO" id="GO:0042802">
    <property type="term" value="F:identical protein binding"/>
    <property type="evidence" value="ECO:0000353"/>
    <property type="project" value="IntAct"/>
</dbReference>
<dbReference type="GO" id="GO:0051219">
    <property type="term" value="F:phosphoprotein binding"/>
    <property type="evidence" value="ECO:0007669"/>
    <property type="project" value="Ensembl"/>
</dbReference>
<dbReference type="GO" id="GO:0010977">
    <property type="term" value="P:negative regulation of neuron projection development"/>
    <property type="evidence" value="ECO:0000316"/>
    <property type="project" value="WormBase"/>
</dbReference>
<dbReference type="GO" id="GO:0007399">
    <property type="term" value="P:nervous system development"/>
    <property type="evidence" value="ECO:0000304"/>
    <property type="project" value="ProtInc"/>
</dbReference>
<dbReference type="GO" id="GO:0006139">
    <property type="term" value="P:nucleobase-containing compound metabolic process"/>
    <property type="evidence" value="ECO:0000304"/>
    <property type="project" value="ProtInc"/>
</dbReference>
<dbReference type="GO" id="GO:0150052">
    <property type="term" value="P:regulation of postsynapse assembly"/>
    <property type="evidence" value="ECO:0007669"/>
    <property type="project" value="Ensembl"/>
</dbReference>
<dbReference type="GO" id="GO:0071526">
    <property type="term" value="P:semaphorin-plexin signaling pathway"/>
    <property type="evidence" value="ECO:0007669"/>
    <property type="project" value="Ensembl"/>
</dbReference>
<dbReference type="CDD" id="cd01314">
    <property type="entry name" value="D-HYD"/>
    <property type="match status" value="1"/>
</dbReference>
<dbReference type="DisProt" id="DP02620"/>
<dbReference type="FunFam" id="3.20.20.140:FF:000217">
    <property type="entry name" value="Dihydropyrimidinase-related protein 1"/>
    <property type="match status" value="1"/>
</dbReference>
<dbReference type="FunFam" id="2.30.40.10:FF:000021">
    <property type="entry name" value="Dihydropyrimidinase-related protein 2"/>
    <property type="match status" value="1"/>
</dbReference>
<dbReference type="Gene3D" id="3.20.20.140">
    <property type="entry name" value="Metal-dependent hydrolases"/>
    <property type="match status" value="1"/>
</dbReference>
<dbReference type="Gene3D" id="2.30.40.10">
    <property type="entry name" value="Urease, subunit C, domain 1"/>
    <property type="match status" value="1"/>
</dbReference>
<dbReference type="InterPro" id="IPR006680">
    <property type="entry name" value="Amidohydro-rel"/>
</dbReference>
<dbReference type="InterPro" id="IPR011778">
    <property type="entry name" value="Hydantoinase/dihydroPyrase"/>
</dbReference>
<dbReference type="InterPro" id="IPR011059">
    <property type="entry name" value="Metal-dep_hydrolase_composite"/>
</dbReference>
<dbReference type="InterPro" id="IPR032466">
    <property type="entry name" value="Metal_Hydrolase"/>
</dbReference>
<dbReference type="InterPro" id="IPR050378">
    <property type="entry name" value="Metallo-dep_Hydrolases_sf"/>
</dbReference>
<dbReference type="NCBIfam" id="TIGR02033">
    <property type="entry name" value="D-hydantoinase"/>
    <property type="match status" value="1"/>
</dbReference>
<dbReference type="PANTHER" id="PTHR11647:SF54">
    <property type="entry name" value="DIHYDROPYRIMIDINASE-RELATED PROTEIN 1"/>
    <property type="match status" value="1"/>
</dbReference>
<dbReference type="PANTHER" id="PTHR11647">
    <property type="entry name" value="HYDRANTOINASE/DIHYDROPYRIMIDINASE FAMILY MEMBER"/>
    <property type="match status" value="1"/>
</dbReference>
<dbReference type="Pfam" id="PF01979">
    <property type="entry name" value="Amidohydro_1"/>
    <property type="match status" value="1"/>
</dbReference>
<dbReference type="SUPFAM" id="SSF51338">
    <property type="entry name" value="Composite domain of metallo-dependent hydrolases"/>
    <property type="match status" value="2"/>
</dbReference>
<dbReference type="SUPFAM" id="SSF51556">
    <property type="entry name" value="Metallo-dependent hydrolases"/>
    <property type="match status" value="1"/>
</dbReference>
<proteinExistence type="evidence at protein level"/>
<accession>Q14194</accession>
<accession>A0EJG6</accession>
<accession>Q13024</accession>
<accession>Q4W5F1</accession>
<accession>Q96TC8</accession>